<sequence>MSFPKELEKVLEITKAQNVWRRTQTLNLIASENVMSPLAESVYMSDFMSRYAEGKPYKRYYQGTKYTDEIETLAMDLMNEITNSKDCDLRPTSGTIANAAVFRVLAEPGDKALIAPVQAGAHVSHTKFGTLGALGIQHIEMPFDEENINVDVDKAIKMIEEVKPKFVVLGGSLYLFPHPTKELAPHVHAVGAKLVYDAAHVYGLIEGKVWSSPLKEGADIMTVSTHKTFPGPQGGAIFSDGSEVFKQVSRTIFPWFVSNHHLHRLPATAVTAIEMKYFGESYANQITRNSKALAEALAERGFKVIGENLGYTKSHQVAVDVRQFGGGNKIAKLLEDANIIVNKNLLPYDKPENVSDPSGLRIGVQEMTRYGMKESEMEEIAELFKKVIIDKKDINEVKKEVIDMRKNFLEVKYTFDDMKDLEKYSSKSLKLII</sequence>
<proteinExistence type="inferred from homology"/>
<gene>
    <name evidence="1" type="primary">glyA</name>
    <name type="ordered locus">YG5714_1587</name>
</gene>
<accession>C3NEW0</accession>
<organism>
    <name type="scientific">Saccharolobus islandicus (strain Y.G.57.14 / Yellowstone #1)</name>
    <name type="common">Sulfolobus islandicus</name>
    <dbReference type="NCBI Taxonomy" id="439386"/>
    <lineage>
        <taxon>Archaea</taxon>
        <taxon>Thermoproteota</taxon>
        <taxon>Thermoprotei</taxon>
        <taxon>Sulfolobales</taxon>
        <taxon>Sulfolobaceae</taxon>
        <taxon>Saccharolobus</taxon>
    </lineage>
</organism>
<protein>
    <recommendedName>
        <fullName evidence="1">Serine hydroxymethyltransferase</fullName>
        <shortName evidence="1">SHMT</shortName>
        <shortName evidence="1">Serine methylase</shortName>
        <ecNumber evidence="1">2.1.2.-</ecNumber>
    </recommendedName>
</protein>
<feature type="chain" id="PRO_1000202276" description="Serine hydroxymethyltransferase">
    <location>
        <begin position="1"/>
        <end position="433"/>
    </location>
</feature>
<feature type="binding site" evidence="1">
    <location>
        <begin position="121"/>
        <end position="123"/>
    </location>
    <ligand>
        <name>(6S)-5,6,7,8-tetrahydrofolate</name>
        <dbReference type="ChEBI" id="CHEBI:57453"/>
    </ligand>
</feature>
<feature type="binding site" evidence="1">
    <location>
        <position position="243"/>
    </location>
    <ligand>
        <name>(6S)-5,6,7,8-tetrahydrofolate</name>
        <dbReference type="ChEBI" id="CHEBI:57453"/>
    </ligand>
</feature>
<feature type="site" description="Plays an important role in substrate specificity" evidence="1">
    <location>
        <position position="226"/>
    </location>
</feature>
<feature type="modified residue" description="N6-(pyridoxal phosphate)lysine" evidence="1">
    <location>
        <position position="227"/>
    </location>
</feature>
<reference key="1">
    <citation type="journal article" date="2009" name="Proc. Natl. Acad. Sci. U.S.A.">
        <title>Biogeography of the Sulfolobus islandicus pan-genome.</title>
        <authorList>
            <person name="Reno M.L."/>
            <person name="Held N.L."/>
            <person name="Fields C.J."/>
            <person name="Burke P.V."/>
            <person name="Whitaker R.J."/>
        </authorList>
    </citation>
    <scope>NUCLEOTIDE SEQUENCE [LARGE SCALE GENOMIC DNA]</scope>
    <source>
        <strain>Y.G.57.14 / Yellowstone #1</strain>
    </source>
</reference>
<comment type="function">
    <text evidence="1">Catalyzes the reversible interconversion of serine and glycine with a modified folate serving as the one-carbon carrier. Also exhibits a pteridine-independent aldolase activity toward beta-hydroxyamino acids, producing glycine and aldehydes, via a retro-aldol mechanism.</text>
</comment>
<comment type="cofactor">
    <cofactor evidence="1">
        <name>pyridoxal 5'-phosphate</name>
        <dbReference type="ChEBI" id="CHEBI:597326"/>
    </cofactor>
</comment>
<comment type="pathway">
    <text evidence="1">Amino-acid biosynthesis; glycine biosynthesis; glycine from L-serine: step 1/1.</text>
</comment>
<comment type="subunit">
    <text evidence="1">Homodimer.</text>
</comment>
<comment type="subcellular location">
    <subcellularLocation>
        <location evidence="1">Cytoplasm</location>
    </subcellularLocation>
</comment>
<comment type="similarity">
    <text evidence="1">Belongs to the SHMT family.</text>
</comment>
<evidence type="ECO:0000255" key="1">
    <source>
        <dbReference type="HAMAP-Rule" id="MF_00051"/>
    </source>
</evidence>
<keyword id="KW-0028">Amino-acid biosynthesis</keyword>
<keyword id="KW-0963">Cytoplasm</keyword>
<keyword id="KW-0554">One-carbon metabolism</keyword>
<keyword id="KW-0663">Pyridoxal phosphate</keyword>
<keyword id="KW-0808">Transferase</keyword>
<name>GLYA_SACI7</name>
<dbReference type="EC" id="2.1.2.-" evidence="1"/>
<dbReference type="EMBL" id="CP001403">
    <property type="protein sequence ID" value="ACP45849.1"/>
    <property type="molecule type" value="Genomic_DNA"/>
</dbReference>
<dbReference type="RefSeq" id="WP_012716228.1">
    <property type="nucleotide sequence ID" value="NC_012622.1"/>
</dbReference>
<dbReference type="SMR" id="C3NEW0"/>
<dbReference type="GeneID" id="7806099"/>
<dbReference type="KEGG" id="siy:YG5714_1587"/>
<dbReference type="HOGENOM" id="CLU_022477_2_1_2"/>
<dbReference type="UniPathway" id="UPA00288">
    <property type="reaction ID" value="UER01023"/>
</dbReference>
<dbReference type="Proteomes" id="UP000002308">
    <property type="component" value="Chromosome"/>
</dbReference>
<dbReference type="GO" id="GO:0005737">
    <property type="term" value="C:cytoplasm"/>
    <property type="evidence" value="ECO:0007669"/>
    <property type="project" value="UniProtKB-SubCell"/>
</dbReference>
<dbReference type="GO" id="GO:0004372">
    <property type="term" value="F:glycine hydroxymethyltransferase activity"/>
    <property type="evidence" value="ECO:0007669"/>
    <property type="project" value="UniProtKB-UniRule"/>
</dbReference>
<dbReference type="GO" id="GO:0030170">
    <property type="term" value="F:pyridoxal phosphate binding"/>
    <property type="evidence" value="ECO:0007669"/>
    <property type="project" value="UniProtKB-UniRule"/>
</dbReference>
<dbReference type="GO" id="GO:0019264">
    <property type="term" value="P:glycine biosynthetic process from serine"/>
    <property type="evidence" value="ECO:0007669"/>
    <property type="project" value="UniProtKB-UniRule"/>
</dbReference>
<dbReference type="GO" id="GO:0035999">
    <property type="term" value="P:tetrahydrofolate interconversion"/>
    <property type="evidence" value="ECO:0007669"/>
    <property type="project" value="InterPro"/>
</dbReference>
<dbReference type="CDD" id="cd00378">
    <property type="entry name" value="SHMT"/>
    <property type="match status" value="1"/>
</dbReference>
<dbReference type="FunFam" id="3.40.640.10:FF:000101">
    <property type="entry name" value="Serine hydroxymethyltransferase"/>
    <property type="match status" value="1"/>
</dbReference>
<dbReference type="FunFam" id="3.90.1150.10:FF:000136">
    <property type="entry name" value="Serine hydroxymethyltransferase"/>
    <property type="match status" value="1"/>
</dbReference>
<dbReference type="Gene3D" id="3.90.1150.10">
    <property type="entry name" value="Aspartate Aminotransferase, domain 1"/>
    <property type="match status" value="1"/>
</dbReference>
<dbReference type="Gene3D" id="3.40.640.10">
    <property type="entry name" value="Type I PLP-dependent aspartate aminotransferase-like (Major domain)"/>
    <property type="match status" value="1"/>
</dbReference>
<dbReference type="HAMAP" id="MF_00051">
    <property type="entry name" value="SHMT"/>
    <property type="match status" value="1"/>
</dbReference>
<dbReference type="InterPro" id="IPR015424">
    <property type="entry name" value="PyrdxlP-dep_Trfase"/>
</dbReference>
<dbReference type="InterPro" id="IPR015421">
    <property type="entry name" value="PyrdxlP-dep_Trfase_major"/>
</dbReference>
<dbReference type="InterPro" id="IPR015422">
    <property type="entry name" value="PyrdxlP-dep_Trfase_small"/>
</dbReference>
<dbReference type="InterPro" id="IPR001085">
    <property type="entry name" value="Ser_HO-MeTrfase"/>
</dbReference>
<dbReference type="InterPro" id="IPR049943">
    <property type="entry name" value="Ser_HO-MeTrfase-like"/>
</dbReference>
<dbReference type="InterPro" id="IPR019798">
    <property type="entry name" value="Ser_HO-MeTrfase_PLP_BS"/>
</dbReference>
<dbReference type="InterPro" id="IPR039429">
    <property type="entry name" value="SHMT-like_dom"/>
</dbReference>
<dbReference type="NCBIfam" id="NF000586">
    <property type="entry name" value="PRK00011.1"/>
    <property type="match status" value="1"/>
</dbReference>
<dbReference type="PANTHER" id="PTHR11680">
    <property type="entry name" value="SERINE HYDROXYMETHYLTRANSFERASE"/>
    <property type="match status" value="1"/>
</dbReference>
<dbReference type="PANTHER" id="PTHR11680:SF35">
    <property type="entry name" value="SERINE HYDROXYMETHYLTRANSFERASE 1"/>
    <property type="match status" value="1"/>
</dbReference>
<dbReference type="Pfam" id="PF00464">
    <property type="entry name" value="SHMT"/>
    <property type="match status" value="1"/>
</dbReference>
<dbReference type="PIRSF" id="PIRSF000412">
    <property type="entry name" value="SHMT"/>
    <property type="match status" value="1"/>
</dbReference>
<dbReference type="SUPFAM" id="SSF53383">
    <property type="entry name" value="PLP-dependent transferases"/>
    <property type="match status" value="1"/>
</dbReference>
<dbReference type="PROSITE" id="PS00096">
    <property type="entry name" value="SHMT"/>
    <property type="match status" value="1"/>
</dbReference>